<reference key="1">
    <citation type="journal article" date="2008" name="J. Bacteriol.">
        <title>Genome sequence of the streptomycin-producing microorganism Streptomyces griseus IFO 13350.</title>
        <authorList>
            <person name="Ohnishi Y."/>
            <person name="Ishikawa J."/>
            <person name="Hara H."/>
            <person name="Suzuki H."/>
            <person name="Ikenoya M."/>
            <person name="Ikeda H."/>
            <person name="Yamashita A."/>
            <person name="Hattori M."/>
            <person name="Horinouchi S."/>
        </authorList>
    </citation>
    <scope>NUCLEOTIDE SEQUENCE [LARGE SCALE GENOMIC DNA]</scope>
    <source>
        <strain>JCM 4626 / CBS 651.72 / NBRC 13350 / KCC S-0626 / ISP 5235</strain>
    </source>
</reference>
<sequence>MAKKSKIARNDRRRETVERYAARRAELKEVIRRPGTPEPERNRAVEELRRQPRDASATRVRNRDSVDGRPRGYLRRFGLSRVRMREQAHAGFLPGVTTSSW</sequence>
<comment type="function">
    <text evidence="1">Binds 16S rRNA, required for the assembly of 30S particles and may also be responsible for determining the conformation of the 16S rRNA at the A site.</text>
</comment>
<comment type="subunit">
    <text evidence="1">Part of the 30S ribosomal subunit. Contacts proteins S3 and S10.</text>
</comment>
<comment type="similarity">
    <text evidence="1">Belongs to the universal ribosomal protein uS14 family.</text>
</comment>
<proteinExistence type="inferred from homology"/>
<dbReference type="EMBL" id="AP009493">
    <property type="protein sequence ID" value="BAG17373.1"/>
    <property type="molecule type" value="Genomic_DNA"/>
</dbReference>
<dbReference type="RefSeq" id="WP_012377876.1">
    <property type="nucleotide sequence ID" value="NC_010572.1"/>
</dbReference>
<dbReference type="SMR" id="B1VRF5"/>
<dbReference type="KEGG" id="sgr:SGR_544"/>
<dbReference type="PATRIC" id="fig|455632.4.peg.526"/>
<dbReference type="eggNOG" id="COG0199">
    <property type="taxonomic scope" value="Bacteria"/>
</dbReference>
<dbReference type="HOGENOM" id="CLU_139869_0_1_11"/>
<dbReference type="Proteomes" id="UP000001685">
    <property type="component" value="Chromosome"/>
</dbReference>
<dbReference type="GO" id="GO:0015935">
    <property type="term" value="C:small ribosomal subunit"/>
    <property type="evidence" value="ECO:0007669"/>
    <property type="project" value="TreeGrafter"/>
</dbReference>
<dbReference type="GO" id="GO:0019843">
    <property type="term" value="F:rRNA binding"/>
    <property type="evidence" value="ECO:0007669"/>
    <property type="project" value="UniProtKB-UniRule"/>
</dbReference>
<dbReference type="GO" id="GO:0003735">
    <property type="term" value="F:structural constituent of ribosome"/>
    <property type="evidence" value="ECO:0007669"/>
    <property type="project" value="InterPro"/>
</dbReference>
<dbReference type="GO" id="GO:0006412">
    <property type="term" value="P:translation"/>
    <property type="evidence" value="ECO:0007669"/>
    <property type="project" value="UniProtKB-UniRule"/>
</dbReference>
<dbReference type="FunFam" id="1.10.287.1480:FF:000001">
    <property type="entry name" value="30S ribosomal protein S14"/>
    <property type="match status" value="1"/>
</dbReference>
<dbReference type="Gene3D" id="1.10.287.1480">
    <property type="match status" value="1"/>
</dbReference>
<dbReference type="HAMAP" id="MF_00537">
    <property type="entry name" value="Ribosomal_uS14_1"/>
    <property type="match status" value="1"/>
</dbReference>
<dbReference type="InterPro" id="IPR001209">
    <property type="entry name" value="Ribosomal_uS14"/>
</dbReference>
<dbReference type="InterPro" id="IPR023036">
    <property type="entry name" value="Ribosomal_uS14_bac/plastid"/>
</dbReference>
<dbReference type="NCBIfam" id="NF006477">
    <property type="entry name" value="PRK08881.1"/>
    <property type="match status" value="1"/>
</dbReference>
<dbReference type="PANTHER" id="PTHR19836">
    <property type="entry name" value="30S RIBOSOMAL PROTEIN S14"/>
    <property type="match status" value="1"/>
</dbReference>
<dbReference type="PANTHER" id="PTHR19836:SF23">
    <property type="entry name" value="SMALL RIBOSOMAL SUBUNIT PROTEIN US14A"/>
    <property type="match status" value="1"/>
</dbReference>
<dbReference type="Pfam" id="PF00253">
    <property type="entry name" value="Ribosomal_S14"/>
    <property type="match status" value="1"/>
</dbReference>
<dbReference type="SUPFAM" id="SSF57716">
    <property type="entry name" value="Glucocorticoid receptor-like (DNA-binding domain)"/>
    <property type="match status" value="1"/>
</dbReference>
<evidence type="ECO:0000255" key="1">
    <source>
        <dbReference type="HAMAP-Rule" id="MF_00537"/>
    </source>
</evidence>
<evidence type="ECO:0000256" key="2">
    <source>
        <dbReference type="SAM" id="MobiDB-lite"/>
    </source>
</evidence>
<evidence type="ECO:0000305" key="3"/>
<keyword id="KW-0687">Ribonucleoprotein</keyword>
<keyword id="KW-0689">Ribosomal protein</keyword>
<keyword id="KW-0694">RNA-binding</keyword>
<keyword id="KW-0699">rRNA-binding</keyword>
<name>RS14_STRGG</name>
<feature type="chain" id="PRO_1000128602" description="Small ribosomal subunit protein uS14A">
    <location>
        <begin position="1"/>
        <end position="101"/>
    </location>
</feature>
<feature type="region of interest" description="Disordered" evidence="2">
    <location>
        <begin position="32"/>
        <end position="71"/>
    </location>
</feature>
<feature type="compositionally biased region" description="Basic and acidic residues" evidence="2">
    <location>
        <begin position="38"/>
        <end position="53"/>
    </location>
</feature>
<feature type="compositionally biased region" description="Basic and acidic residues" evidence="2">
    <location>
        <begin position="61"/>
        <end position="70"/>
    </location>
</feature>
<gene>
    <name evidence="1" type="primary">rpsN</name>
    <name type="ordered locus">SGR_544</name>
</gene>
<accession>B1VRF5</accession>
<organism>
    <name type="scientific">Streptomyces griseus subsp. griseus (strain JCM 4626 / CBS 651.72 / NBRC 13350 / KCC S-0626 / ISP 5235)</name>
    <dbReference type="NCBI Taxonomy" id="455632"/>
    <lineage>
        <taxon>Bacteria</taxon>
        <taxon>Bacillati</taxon>
        <taxon>Actinomycetota</taxon>
        <taxon>Actinomycetes</taxon>
        <taxon>Kitasatosporales</taxon>
        <taxon>Streptomycetaceae</taxon>
        <taxon>Streptomyces</taxon>
    </lineage>
</organism>
<protein>
    <recommendedName>
        <fullName evidence="1">Small ribosomal subunit protein uS14A</fullName>
    </recommendedName>
    <alternativeName>
        <fullName evidence="3">30S ribosomal protein S14</fullName>
    </alternativeName>
</protein>